<protein>
    <recommendedName>
        <fullName evidence="1">S-ribosylhomocysteine lyase</fullName>
        <ecNumber evidence="1">4.4.1.21</ecNumber>
    </recommendedName>
    <alternativeName>
        <fullName evidence="1">AI-2 synthesis protein</fullName>
    </alternativeName>
    <alternativeName>
        <fullName evidence="1">Autoinducer-2 production protein LuxS</fullName>
    </alternativeName>
</protein>
<dbReference type="EC" id="4.4.1.21" evidence="1"/>
<dbReference type="EMBL" id="FM178379">
    <property type="protein sequence ID" value="CAQ78330.1"/>
    <property type="molecule type" value="Genomic_DNA"/>
</dbReference>
<dbReference type="RefSeq" id="WP_012549452.1">
    <property type="nucleotide sequence ID" value="NC_011312.1"/>
</dbReference>
<dbReference type="SMR" id="B6EGB5"/>
<dbReference type="KEGG" id="vsa:VSAL_I0645"/>
<dbReference type="eggNOG" id="COG1854">
    <property type="taxonomic scope" value="Bacteria"/>
</dbReference>
<dbReference type="HOGENOM" id="CLU_107531_2_0_6"/>
<dbReference type="Proteomes" id="UP000001730">
    <property type="component" value="Chromosome 1"/>
</dbReference>
<dbReference type="GO" id="GO:0005506">
    <property type="term" value="F:iron ion binding"/>
    <property type="evidence" value="ECO:0007669"/>
    <property type="project" value="InterPro"/>
</dbReference>
<dbReference type="GO" id="GO:0043768">
    <property type="term" value="F:S-ribosylhomocysteine lyase activity"/>
    <property type="evidence" value="ECO:0007669"/>
    <property type="project" value="UniProtKB-UniRule"/>
</dbReference>
<dbReference type="GO" id="GO:0009372">
    <property type="term" value="P:quorum sensing"/>
    <property type="evidence" value="ECO:0007669"/>
    <property type="project" value="UniProtKB-UniRule"/>
</dbReference>
<dbReference type="FunFam" id="3.30.1360.80:FF:000001">
    <property type="entry name" value="S-ribosylhomocysteine lyase"/>
    <property type="match status" value="1"/>
</dbReference>
<dbReference type="Gene3D" id="3.30.1360.80">
    <property type="entry name" value="S-ribosylhomocysteinase (LuxS)"/>
    <property type="match status" value="1"/>
</dbReference>
<dbReference type="HAMAP" id="MF_00091">
    <property type="entry name" value="LuxS"/>
    <property type="match status" value="1"/>
</dbReference>
<dbReference type="InterPro" id="IPR037005">
    <property type="entry name" value="LuxS_sf"/>
</dbReference>
<dbReference type="InterPro" id="IPR011249">
    <property type="entry name" value="Metalloenz_LuxS/M16"/>
</dbReference>
<dbReference type="InterPro" id="IPR003815">
    <property type="entry name" value="S-ribosylhomocysteinase"/>
</dbReference>
<dbReference type="NCBIfam" id="NF002602">
    <property type="entry name" value="PRK02260.1-2"/>
    <property type="match status" value="1"/>
</dbReference>
<dbReference type="PANTHER" id="PTHR35799">
    <property type="entry name" value="S-RIBOSYLHOMOCYSTEINE LYASE"/>
    <property type="match status" value="1"/>
</dbReference>
<dbReference type="PANTHER" id="PTHR35799:SF1">
    <property type="entry name" value="S-RIBOSYLHOMOCYSTEINE LYASE"/>
    <property type="match status" value="1"/>
</dbReference>
<dbReference type="Pfam" id="PF02664">
    <property type="entry name" value="LuxS"/>
    <property type="match status" value="1"/>
</dbReference>
<dbReference type="PIRSF" id="PIRSF006160">
    <property type="entry name" value="AI2"/>
    <property type="match status" value="1"/>
</dbReference>
<dbReference type="PRINTS" id="PR01487">
    <property type="entry name" value="LUXSPROTEIN"/>
</dbReference>
<dbReference type="SUPFAM" id="SSF63411">
    <property type="entry name" value="LuxS/MPP-like metallohydrolase"/>
    <property type="match status" value="1"/>
</dbReference>
<sequence length="172" mass="19055">MPLLDSFTVDHTRMEAPAVRVAKKMQTPKGDTITVFDLRFTAPNKDILSEKGIHTLEHLYAGFMRNHLNGTDVEIIDISPMGCRTGFYMSLIGTPVEQTVANAWIASMEDVLNVEDQNKIPELNEYQCGTYTMHSLEEAKAIATAILAAGIQVNKNDDLALPESMLKELSVD</sequence>
<gene>
    <name evidence="1" type="primary">luxS</name>
    <name type="ordered locus">VSAL_I0645</name>
</gene>
<name>LUXS_ALISL</name>
<keyword id="KW-0071">Autoinducer synthesis</keyword>
<keyword id="KW-0408">Iron</keyword>
<keyword id="KW-0456">Lyase</keyword>
<keyword id="KW-0479">Metal-binding</keyword>
<keyword id="KW-0673">Quorum sensing</keyword>
<evidence type="ECO:0000255" key="1">
    <source>
        <dbReference type="HAMAP-Rule" id="MF_00091"/>
    </source>
</evidence>
<proteinExistence type="inferred from homology"/>
<organism>
    <name type="scientific">Aliivibrio salmonicida (strain LFI1238)</name>
    <name type="common">Vibrio salmonicida (strain LFI1238)</name>
    <dbReference type="NCBI Taxonomy" id="316275"/>
    <lineage>
        <taxon>Bacteria</taxon>
        <taxon>Pseudomonadati</taxon>
        <taxon>Pseudomonadota</taxon>
        <taxon>Gammaproteobacteria</taxon>
        <taxon>Vibrionales</taxon>
        <taxon>Vibrionaceae</taxon>
        <taxon>Aliivibrio</taxon>
    </lineage>
</organism>
<feature type="chain" id="PRO_1000093300" description="S-ribosylhomocysteine lyase">
    <location>
        <begin position="1"/>
        <end position="172"/>
    </location>
</feature>
<feature type="binding site" evidence="1">
    <location>
        <position position="54"/>
    </location>
    <ligand>
        <name>Fe cation</name>
        <dbReference type="ChEBI" id="CHEBI:24875"/>
    </ligand>
</feature>
<feature type="binding site" evidence="1">
    <location>
        <position position="58"/>
    </location>
    <ligand>
        <name>Fe cation</name>
        <dbReference type="ChEBI" id="CHEBI:24875"/>
    </ligand>
</feature>
<feature type="binding site" evidence="1">
    <location>
        <position position="128"/>
    </location>
    <ligand>
        <name>Fe cation</name>
        <dbReference type="ChEBI" id="CHEBI:24875"/>
    </ligand>
</feature>
<accession>B6EGB5</accession>
<comment type="function">
    <text evidence="1">Involved in the synthesis of autoinducer 2 (AI-2) which is secreted by bacteria and is used to communicate both the cell density and the metabolic potential of the environment. The regulation of gene expression in response to changes in cell density is called quorum sensing. Catalyzes the transformation of S-ribosylhomocysteine (RHC) to homocysteine (HC) and 4,5-dihydroxy-2,3-pentadione (DPD).</text>
</comment>
<comment type="catalytic activity">
    <reaction evidence="1">
        <text>S-(5-deoxy-D-ribos-5-yl)-L-homocysteine = (S)-4,5-dihydroxypentane-2,3-dione + L-homocysteine</text>
        <dbReference type="Rhea" id="RHEA:17753"/>
        <dbReference type="ChEBI" id="CHEBI:29484"/>
        <dbReference type="ChEBI" id="CHEBI:58195"/>
        <dbReference type="ChEBI" id="CHEBI:58199"/>
        <dbReference type="EC" id="4.4.1.21"/>
    </reaction>
</comment>
<comment type="cofactor">
    <cofactor evidence="1">
        <name>Fe cation</name>
        <dbReference type="ChEBI" id="CHEBI:24875"/>
    </cofactor>
    <text evidence="1">Binds 1 Fe cation per subunit.</text>
</comment>
<comment type="subunit">
    <text evidence="1">Homodimer.</text>
</comment>
<comment type="similarity">
    <text evidence="1">Belongs to the LuxS family.</text>
</comment>
<reference key="1">
    <citation type="journal article" date="2008" name="BMC Genomics">
        <title>The genome sequence of the fish pathogen Aliivibrio salmonicida strain LFI1238 shows extensive evidence of gene decay.</title>
        <authorList>
            <person name="Hjerde E."/>
            <person name="Lorentzen M.S."/>
            <person name="Holden M.T."/>
            <person name="Seeger K."/>
            <person name="Paulsen S."/>
            <person name="Bason N."/>
            <person name="Churcher C."/>
            <person name="Harris D."/>
            <person name="Norbertczak H."/>
            <person name="Quail M.A."/>
            <person name="Sanders S."/>
            <person name="Thurston S."/>
            <person name="Parkhill J."/>
            <person name="Willassen N.P."/>
            <person name="Thomson N.R."/>
        </authorList>
    </citation>
    <scope>NUCLEOTIDE SEQUENCE [LARGE SCALE GENOMIC DNA]</scope>
    <source>
        <strain>LFI1238</strain>
    </source>
</reference>